<sequence length="318" mass="35600">MFLMNILCLVIPILLAMAFLTLVERKILGYMQLRKGPNIVGPYGLLQPIADAIKLFIKEPLRPLTSSKLMFTLAPTLAFTLALSLWIPMPMPHSLINLNLGVLFILALSSLAVYSILWSGWASNSKYALIGALRAVAQTISYEVTLAIILLSVMMMNGSFTLSTLTTTQEHMWLILPLWPLAMMWFISTLAETNRAPFDLTEGESELVSGFNVEYAAGPFALFFMAEYTNIIMMNALTATLFLGAFHNPLFPELFTVNFITKTLILTAIFLWVRASYPRFRYDQLMHLLWKSFLPLTLALCMLHVSIPALSAGVPPHM</sequence>
<keyword id="KW-0249">Electron transport</keyword>
<keyword id="KW-0472">Membrane</keyword>
<keyword id="KW-0496">Mitochondrion</keyword>
<keyword id="KW-0999">Mitochondrion inner membrane</keyword>
<keyword id="KW-0520">NAD</keyword>
<keyword id="KW-0679">Respiratory chain</keyword>
<keyword id="KW-1278">Translocase</keyword>
<keyword id="KW-0812">Transmembrane</keyword>
<keyword id="KW-1133">Transmembrane helix</keyword>
<keyword id="KW-0813">Transport</keyword>
<keyword id="KW-0830">Ubiquinone</keyword>
<geneLocation type="mitochondrion"/>
<organism>
    <name type="scientific">Zaedyus pichiy</name>
    <name type="common">Pichi</name>
    <name type="synonym">Darwin's armadillo</name>
    <dbReference type="NCBI Taxonomy" id="183747"/>
    <lineage>
        <taxon>Eukaryota</taxon>
        <taxon>Metazoa</taxon>
        <taxon>Chordata</taxon>
        <taxon>Craniata</taxon>
        <taxon>Vertebrata</taxon>
        <taxon>Euteleostomi</taxon>
        <taxon>Mammalia</taxon>
        <taxon>Eutheria</taxon>
        <taxon>Xenarthra</taxon>
        <taxon>Cingulata</taxon>
        <taxon>Chlamyphoridae</taxon>
        <taxon>Zaedyus</taxon>
    </lineage>
</organism>
<evidence type="ECO:0000250" key="1">
    <source>
        <dbReference type="UniProtKB" id="P03886"/>
    </source>
</evidence>
<evidence type="ECO:0000250" key="2">
    <source>
        <dbReference type="UniProtKB" id="P03887"/>
    </source>
</evidence>
<evidence type="ECO:0000255" key="3"/>
<evidence type="ECO:0000305" key="4"/>
<feature type="chain" id="PRO_0000117502" description="NADH-ubiquinone oxidoreductase chain 1">
    <location>
        <begin position="1"/>
        <end position="318"/>
    </location>
</feature>
<feature type="transmembrane region" description="Helical" evidence="3">
    <location>
        <begin position="2"/>
        <end position="22"/>
    </location>
</feature>
<feature type="transmembrane region" description="Helical" evidence="3">
    <location>
        <begin position="37"/>
        <end position="57"/>
    </location>
</feature>
<feature type="transmembrane region" description="Helical" evidence="3">
    <location>
        <begin position="69"/>
        <end position="89"/>
    </location>
</feature>
<feature type="transmembrane region" description="Helical" evidence="3">
    <location>
        <begin position="100"/>
        <end position="120"/>
    </location>
</feature>
<feature type="transmembrane region" description="Helical" evidence="3">
    <location>
        <begin position="136"/>
        <end position="156"/>
    </location>
</feature>
<feature type="transmembrane region" description="Helical" evidence="3">
    <location>
        <begin position="171"/>
        <end position="191"/>
    </location>
</feature>
<feature type="transmembrane region" description="Helical" evidence="3">
    <location>
        <begin position="231"/>
        <end position="251"/>
    </location>
</feature>
<feature type="transmembrane region" description="Helical" evidence="3">
    <location>
        <begin position="253"/>
        <end position="273"/>
    </location>
</feature>
<feature type="transmembrane region" description="Helical" evidence="3">
    <location>
        <begin position="293"/>
        <end position="313"/>
    </location>
</feature>
<proteinExistence type="inferred from homology"/>
<accession>Q70Y24</accession>
<dbReference type="EC" id="7.1.1.2" evidence="1"/>
<dbReference type="EMBL" id="AJ505836">
    <property type="protein sequence ID" value="CAD44383.1"/>
    <property type="molecule type" value="Genomic_DNA"/>
</dbReference>
<dbReference type="SMR" id="Q70Y24"/>
<dbReference type="GO" id="GO:0005743">
    <property type="term" value="C:mitochondrial inner membrane"/>
    <property type="evidence" value="ECO:0000250"/>
    <property type="project" value="UniProtKB"/>
</dbReference>
<dbReference type="GO" id="GO:0008137">
    <property type="term" value="F:NADH dehydrogenase (ubiquinone) activity"/>
    <property type="evidence" value="ECO:0000250"/>
    <property type="project" value="UniProtKB"/>
</dbReference>
<dbReference type="GO" id="GO:0006120">
    <property type="term" value="P:mitochondrial electron transport, NADH to ubiquinone"/>
    <property type="evidence" value="ECO:0000250"/>
    <property type="project" value="UniProtKB"/>
</dbReference>
<dbReference type="GO" id="GO:0032981">
    <property type="term" value="P:mitochondrial respiratory chain complex I assembly"/>
    <property type="evidence" value="ECO:0000250"/>
    <property type="project" value="UniProtKB"/>
</dbReference>
<dbReference type="HAMAP" id="MF_01350">
    <property type="entry name" value="NDH1_NuoH"/>
    <property type="match status" value="1"/>
</dbReference>
<dbReference type="InterPro" id="IPR001694">
    <property type="entry name" value="NADH_UbQ_OxRdtase_su1/FPO"/>
</dbReference>
<dbReference type="InterPro" id="IPR018086">
    <property type="entry name" value="NADH_UbQ_OxRdtase_su1_CS"/>
</dbReference>
<dbReference type="PANTHER" id="PTHR11432">
    <property type="entry name" value="NADH DEHYDROGENASE SUBUNIT 1"/>
    <property type="match status" value="1"/>
</dbReference>
<dbReference type="PANTHER" id="PTHR11432:SF3">
    <property type="entry name" value="NADH-UBIQUINONE OXIDOREDUCTASE CHAIN 1"/>
    <property type="match status" value="1"/>
</dbReference>
<dbReference type="Pfam" id="PF00146">
    <property type="entry name" value="NADHdh"/>
    <property type="match status" value="1"/>
</dbReference>
<dbReference type="PROSITE" id="PS00667">
    <property type="entry name" value="COMPLEX1_ND1_1"/>
    <property type="match status" value="1"/>
</dbReference>
<dbReference type="PROSITE" id="PS00668">
    <property type="entry name" value="COMPLEX1_ND1_2"/>
    <property type="match status" value="1"/>
</dbReference>
<reference key="1">
    <citation type="journal article" date="2003" name="Mol. Phylogenet. Evol.">
        <title>Molecular systematics of armadillos (Xenarthra, Dasypodidae): contribution of maximum likelihood and Bayesian analyses of mitochondrial and nuclear genes.</title>
        <authorList>
            <person name="Delsuc F."/>
            <person name="Stanhope M.J."/>
            <person name="Douzery E.J."/>
        </authorList>
    </citation>
    <scope>NUCLEOTIDE SEQUENCE [GENOMIC DNA]</scope>
</reference>
<comment type="function">
    <text evidence="1">Core subunit of the mitochondrial membrane respiratory chain NADH dehydrogenase (Complex I) which catalyzes electron transfer from NADH through the respiratory chain, using ubiquinone as an electron acceptor. Essential for the catalytic activity and assembly of complex I.</text>
</comment>
<comment type="catalytic activity">
    <reaction evidence="1">
        <text>a ubiquinone + NADH + 5 H(+)(in) = a ubiquinol + NAD(+) + 4 H(+)(out)</text>
        <dbReference type="Rhea" id="RHEA:29091"/>
        <dbReference type="Rhea" id="RHEA-COMP:9565"/>
        <dbReference type="Rhea" id="RHEA-COMP:9566"/>
        <dbReference type="ChEBI" id="CHEBI:15378"/>
        <dbReference type="ChEBI" id="CHEBI:16389"/>
        <dbReference type="ChEBI" id="CHEBI:17976"/>
        <dbReference type="ChEBI" id="CHEBI:57540"/>
        <dbReference type="ChEBI" id="CHEBI:57945"/>
        <dbReference type="EC" id="7.1.1.2"/>
    </reaction>
</comment>
<comment type="subunit">
    <text evidence="2">Core subunit of respiratory chain NADH dehydrogenase (Complex I) which is composed of 45 different subunits.</text>
</comment>
<comment type="subcellular location">
    <subcellularLocation>
        <location evidence="2">Mitochondrion inner membrane</location>
        <topology evidence="3">Multi-pass membrane protein</topology>
    </subcellularLocation>
</comment>
<comment type="similarity">
    <text evidence="4">Belongs to the complex I subunit 1 family.</text>
</comment>
<name>NU1M_ZAEPI</name>
<gene>
    <name type="primary">MT-ND1</name>
    <name type="synonym">MTND1</name>
    <name type="synonym">NADH1</name>
    <name type="synonym">ND1</name>
</gene>
<protein>
    <recommendedName>
        <fullName>NADH-ubiquinone oxidoreductase chain 1</fullName>
        <ecNumber evidence="1">7.1.1.2</ecNumber>
    </recommendedName>
    <alternativeName>
        <fullName>NADH dehydrogenase subunit 1</fullName>
    </alternativeName>
</protein>